<protein>
    <recommendedName>
        <fullName evidence="1">tRNA pseudouridine synthase A</fullName>
        <ecNumber evidence="1">5.4.99.12</ecNumber>
    </recommendedName>
    <alternativeName>
        <fullName evidence="1">tRNA pseudouridine(38-40) synthase</fullName>
    </alternativeName>
    <alternativeName>
        <fullName evidence="1">tRNA pseudouridylate synthase I</fullName>
    </alternativeName>
    <alternativeName>
        <fullName evidence="1">tRNA-uridine isomerase I</fullName>
    </alternativeName>
</protein>
<keyword id="KW-0413">Isomerase</keyword>
<keyword id="KW-0819">tRNA processing</keyword>
<dbReference type="EC" id="5.4.99.12" evidence="1"/>
<dbReference type="EMBL" id="AM884177">
    <property type="protein sequence ID" value="CAP07116.1"/>
    <property type="molecule type" value="Genomic_DNA"/>
</dbReference>
<dbReference type="RefSeq" id="WP_009873831.1">
    <property type="nucleotide sequence ID" value="NC_010280.2"/>
</dbReference>
<dbReference type="SMR" id="B0BCA1"/>
<dbReference type="KEGG" id="ctl:CTLon_0719"/>
<dbReference type="HOGENOM" id="CLU_014673_0_1_0"/>
<dbReference type="Proteomes" id="UP001154401">
    <property type="component" value="Chromosome"/>
</dbReference>
<dbReference type="GO" id="GO:0003723">
    <property type="term" value="F:RNA binding"/>
    <property type="evidence" value="ECO:0007669"/>
    <property type="project" value="InterPro"/>
</dbReference>
<dbReference type="GO" id="GO:0160147">
    <property type="term" value="F:tRNA pseudouridine(38-40) synthase activity"/>
    <property type="evidence" value="ECO:0007669"/>
    <property type="project" value="UniProtKB-EC"/>
</dbReference>
<dbReference type="GO" id="GO:0031119">
    <property type="term" value="P:tRNA pseudouridine synthesis"/>
    <property type="evidence" value="ECO:0007669"/>
    <property type="project" value="UniProtKB-UniRule"/>
</dbReference>
<dbReference type="CDD" id="cd02570">
    <property type="entry name" value="PseudoU_synth_EcTruA"/>
    <property type="match status" value="1"/>
</dbReference>
<dbReference type="FunFam" id="3.30.70.580:FF:000001">
    <property type="entry name" value="tRNA pseudouridine synthase A"/>
    <property type="match status" value="1"/>
</dbReference>
<dbReference type="Gene3D" id="3.30.70.660">
    <property type="entry name" value="Pseudouridine synthase I, catalytic domain, C-terminal subdomain"/>
    <property type="match status" value="1"/>
</dbReference>
<dbReference type="Gene3D" id="3.30.70.580">
    <property type="entry name" value="Pseudouridine synthase I, catalytic domain, N-terminal subdomain"/>
    <property type="match status" value="1"/>
</dbReference>
<dbReference type="HAMAP" id="MF_00171">
    <property type="entry name" value="TruA"/>
    <property type="match status" value="1"/>
</dbReference>
<dbReference type="InterPro" id="IPR020103">
    <property type="entry name" value="PsdUridine_synth_cat_dom_sf"/>
</dbReference>
<dbReference type="InterPro" id="IPR001406">
    <property type="entry name" value="PsdUridine_synth_TruA"/>
</dbReference>
<dbReference type="InterPro" id="IPR020097">
    <property type="entry name" value="PsdUridine_synth_TruA_a/b_dom"/>
</dbReference>
<dbReference type="InterPro" id="IPR020095">
    <property type="entry name" value="PsdUridine_synth_TruA_C"/>
</dbReference>
<dbReference type="InterPro" id="IPR020094">
    <property type="entry name" value="TruA/RsuA/RluB/E/F_N"/>
</dbReference>
<dbReference type="NCBIfam" id="TIGR00071">
    <property type="entry name" value="hisT_truA"/>
    <property type="match status" value="1"/>
</dbReference>
<dbReference type="PANTHER" id="PTHR11142">
    <property type="entry name" value="PSEUDOURIDYLATE SYNTHASE"/>
    <property type="match status" value="1"/>
</dbReference>
<dbReference type="PANTHER" id="PTHR11142:SF0">
    <property type="entry name" value="TRNA PSEUDOURIDINE SYNTHASE-LIKE 1"/>
    <property type="match status" value="1"/>
</dbReference>
<dbReference type="Pfam" id="PF01416">
    <property type="entry name" value="PseudoU_synth_1"/>
    <property type="match status" value="2"/>
</dbReference>
<dbReference type="PIRSF" id="PIRSF001430">
    <property type="entry name" value="tRNA_psdUrid_synth"/>
    <property type="match status" value="1"/>
</dbReference>
<dbReference type="SUPFAM" id="SSF55120">
    <property type="entry name" value="Pseudouridine synthase"/>
    <property type="match status" value="1"/>
</dbReference>
<feature type="chain" id="PRO_1000097731" description="tRNA pseudouridine synthase A">
    <location>
        <begin position="1"/>
        <end position="267"/>
    </location>
</feature>
<feature type="active site" description="Nucleophile" evidence="1">
    <location>
        <position position="53"/>
    </location>
</feature>
<feature type="binding site" evidence="1">
    <location>
        <position position="114"/>
    </location>
    <ligand>
        <name>substrate</name>
    </ligand>
</feature>
<gene>
    <name evidence="1" type="primary">truA</name>
    <name type="ordered locus">CTLon_0719</name>
</gene>
<proteinExistence type="inferred from homology"/>
<accession>B0BCA1</accession>
<name>TRUA_CHLTB</name>
<reference key="1">
    <citation type="journal article" date="2008" name="Genome Res.">
        <title>Chlamydia trachomatis: genome sequence analysis of lymphogranuloma venereum isolates.</title>
        <authorList>
            <person name="Thomson N.R."/>
            <person name="Holden M.T.G."/>
            <person name="Carder C."/>
            <person name="Lennard N."/>
            <person name="Lockey S.J."/>
            <person name="Marsh P."/>
            <person name="Skipp P."/>
            <person name="O'Connor C.D."/>
            <person name="Goodhead I."/>
            <person name="Norbertzcak H."/>
            <person name="Harris B."/>
            <person name="Ormond D."/>
            <person name="Rance R."/>
            <person name="Quail M.A."/>
            <person name="Parkhill J."/>
            <person name="Stephens R.S."/>
            <person name="Clarke I.N."/>
        </authorList>
    </citation>
    <scope>NUCLEOTIDE SEQUENCE [LARGE SCALE GENOMIC DNA]</scope>
    <source>
        <strain>UCH-1/proctitis</strain>
    </source>
</reference>
<comment type="function">
    <text evidence="1">Formation of pseudouridine at positions 38, 39 and 40 in the anticodon stem and loop of transfer RNAs.</text>
</comment>
<comment type="catalytic activity">
    <reaction evidence="1">
        <text>uridine(38/39/40) in tRNA = pseudouridine(38/39/40) in tRNA</text>
        <dbReference type="Rhea" id="RHEA:22376"/>
        <dbReference type="Rhea" id="RHEA-COMP:10085"/>
        <dbReference type="Rhea" id="RHEA-COMP:10087"/>
        <dbReference type="ChEBI" id="CHEBI:65314"/>
        <dbReference type="ChEBI" id="CHEBI:65315"/>
        <dbReference type="EC" id="5.4.99.12"/>
    </reaction>
</comment>
<comment type="subunit">
    <text evidence="1">Homodimer.</text>
</comment>
<comment type="similarity">
    <text evidence="1">Belongs to the tRNA pseudouridine synthase TruA family.</text>
</comment>
<organism>
    <name type="scientific">Chlamydia trachomatis serovar L2b (strain UCH-1/proctitis)</name>
    <dbReference type="NCBI Taxonomy" id="471473"/>
    <lineage>
        <taxon>Bacteria</taxon>
        <taxon>Pseudomonadati</taxon>
        <taxon>Chlamydiota</taxon>
        <taxon>Chlamydiia</taxon>
        <taxon>Chlamydiales</taxon>
        <taxon>Chlamydiaceae</taxon>
        <taxon>Chlamydia/Chlamydophila group</taxon>
        <taxon>Chlamydia</taxon>
    </lineage>
</organism>
<sequence>MTKKIVLQIAYQGTSYSGWQYQPNALSIQEVLKTILKKIAGFRISVISSGRTDAGVHAQGQIAHFHCPDHPHFTDPRQIQKMLNALLPHDIVIRDAVMTDGDFHSRFSAIAKEYRYTLSLLPKPLPHHRLFCFSPRYKLNIARMQEAAQYLVGTHDFASFANLGREYSSTIRTLYTLDLSEQEHLVTVICRGNGFLYKMVRNIVGALLDIGKGKYPPEHLLDMLATKDRRKGPPSAPPYGLSLHHVCYPPPYQWFCKHEHNNSSEGK</sequence>
<evidence type="ECO:0000255" key="1">
    <source>
        <dbReference type="HAMAP-Rule" id="MF_00171"/>
    </source>
</evidence>